<gene>
    <name evidence="1" type="primary">flgH2</name>
    <name type="ordered locus">CV_2882</name>
</gene>
<keyword id="KW-0975">Bacterial flagellum</keyword>
<keyword id="KW-0998">Cell outer membrane</keyword>
<keyword id="KW-0449">Lipoprotein</keyword>
<keyword id="KW-0472">Membrane</keyword>
<keyword id="KW-0564">Palmitate</keyword>
<keyword id="KW-1185">Reference proteome</keyword>
<keyword id="KW-0732">Signal</keyword>
<sequence length="227" mass="23819">MKSKLAITMVSALLLAACAVQEPPLVQGPTTAKPQPRPVGLPANGAIFQAASYRPMFQDAMPIQVGDTLQITIQENSSTSQSEQVTDTRTSGLSSNITAGVKIPFLPSGLASGLGGTSFNSSGSANNTGKGNNQVATTFVSSITVTVTDVLANGNLVVSGEKMVRINSDTESIRLSGVVNPRDVTPDRTVSSLKVADARIEQQTKGNNRLYNEPGWLSKIFMSLLPI</sequence>
<proteinExistence type="inferred from homology"/>
<comment type="function">
    <text evidence="1">Assembles around the rod to form the L-ring and probably protects the motor/basal body from shearing forces during rotation.</text>
</comment>
<comment type="subunit">
    <text evidence="1">The basal body constitutes a major portion of the flagellar organelle and consists of four rings (L,P,S, and M) mounted on a central rod.</text>
</comment>
<comment type="subcellular location">
    <subcellularLocation>
        <location evidence="1">Cell outer membrane</location>
        <topology evidence="1">Lipid-anchor</topology>
    </subcellularLocation>
    <subcellularLocation>
        <location evidence="1">Bacterial flagellum basal body</location>
    </subcellularLocation>
</comment>
<comment type="similarity">
    <text evidence="1">Belongs to the FlgH family.</text>
</comment>
<accession>Q7NU21</accession>
<protein>
    <recommendedName>
        <fullName evidence="1">Flagellar L-ring protein 2</fullName>
    </recommendedName>
    <alternativeName>
        <fullName evidence="1">Basal body L-ring protein 2</fullName>
    </alternativeName>
</protein>
<reference key="1">
    <citation type="journal article" date="2003" name="Proc. Natl. Acad. Sci. U.S.A.">
        <title>The complete genome sequence of Chromobacterium violaceum reveals remarkable and exploitable bacterial adaptability.</title>
        <authorList>
            <person name="Vasconcelos A.T.R."/>
            <person name="de Almeida D.F."/>
            <person name="Hungria M."/>
            <person name="Guimaraes C.T."/>
            <person name="Antonio R.V."/>
            <person name="Almeida F.C."/>
            <person name="de Almeida L.G.P."/>
            <person name="de Almeida R."/>
            <person name="Alves-Gomes J.A."/>
            <person name="Andrade E.M."/>
            <person name="Araripe J."/>
            <person name="de Araujo M.F.F."/>
            <person name="Astolfi-Filho S."/>
            <person name="Azevedo V."/>
            <person name="Baptista A.J."/>
            <person name="Bataus L.A.M."/>
            <person name="Batista J.S."/>
            <person name="Belo A."/>
            <person name="van den Berg C."/>
            <person name="Bogo M."/>
            <person name="Bonatto S."/>
            <person name="Bordignon J."/>
            <person name="Brigido M.M."/>
            <person name="Brito C.A."/>
            <person name="Brocchi M."/>
            <person name="Burity H.A."/>
            <person name="Camargo A.A."/>
            <person name="Cardoso D.D.P."/>
            <person name="Carneiro N.P."/>
            <person name="Carraro D.M."/>
            <person name="Carvalho C.M.B."/>
            <person name="Cascardo J.C.M."/>
            <person name="Cavada B.S."/>
            <person name="Chueire L.M.O."/>
            <person name="Creczynski-Pasa T.B."/>
            <person name="Cunha-Junior N.C."/>
            <person name="Fagundes N."/>
            <person name="Falcao C.L."/>
            <person name="Fantinatti F."/>
            <person name="Farias I.P."/>
            <person name="Felipe M.S.S."/>
            <person name="Ferrari L.P."/>
            <person name="Ferro J.A."/>
            <person name="Ferro M.I.T."/>
            <person name="Franco G.R."/>
            <person name="Freitas N.S.A."/>
            <person name="Furlan L.R."/>
            <person name="Gazzinelli R.T."/>
            <person name="Gomes E.A."/>
            <person name="Goncalves P.R."/>
            <person name="Grangeiro T.B."/>
            <person name="Grattapaglia D."/>
            <person name="Grisard E.C."/>
            <person name="Hanna E.S."/>
            <person name="Jardim S.N."/>
            <person name="Laurino J."/>
            <person name="Leoi L.C.T."/>
            <person name="Lima L.F.A."/>
            <person name="Loureiro M.F."/>
            <person name="Lyra M.C.C.P."/>
            <person name="Madeira H.M.F."/>
            <person name="Manfio G.P."/>
            <person name="Maranhao A.Q."/>
            <person name="Martins W.S."/>
            <person name="di Mauro S.M.Z."/>
            <person name="de Medeiros S.R.B."/>
            <person name="Meissner R.V."/>
            <person name="Moreira M.A.M."/>
            <person name="Nascimento F.F."/>
            <person name="Nicolas M.F."/>
            <person name="Oliveira J.G."/>
            <person name="Oliveira S.C."/>
            <person name="Paixao R.F.C."/>
            <person name="Parente J.A."/>
            <person name="Pedrosa F.O."/>
            <person name="Pena S.D.J."/>
            <person name="Pereira J.O."/>
            <person name="Pereira M."/>
            <person name="Pinto L.S.R.C."/>
            <person name="Pinto L.S."/>
            <person name="Porto J.I.R."/>
            <person name="Potrich D.P."/>
            <person name="Ramalho-Neto C.E."/>
            <person name="Reis A.M.M."/>
            <person name="Rigo L.U."/>
            <person name="Rondinelli E."/>
            <person name="Santos E.B.P."/>
            <person name="Santos F.R."/>
            <person name="Schneider M.P.C."/>
            <person name="Seuanez H.N."/>
            <person name="Silva A.M.R."/>
            <person name="da Silva A.L.C."/>
            <person name="Silva D.W."/>
            <person name="Silva R."/>
            <person name="Simoes I.C."/>
            <person name="Simon D."/>
            <person name="Soares C.M.A."/>
            <person name="Soares R.B.A."/>
            <person name="Souza E.M."/>
            <person name="Souza K.R.L."/>
            <person name="Souza R.C."/>
            <person name="Steffens M.B.R."/>
            <person name="Steindel M."/>
            <person name="Teixeira S.R."/>
            <person name="Urmenyi T."/>
            <person name="Vettore A."/>
            <person name="Wassem R."/>
            <person name="Zaha A."/>
            <person name="Simpson A.J.G."/>
        </authorList>
    </citation>
    <scope>NUCLEOTIDE SEQUENCE [LARGE SCALE GENOMIC DNA]</scope>
    <source>
        <strain>ATCC 12472 / DSM 30191 / JCM 1249 / CCUG 213 / NBRC 12614 / NCIMB 9131 / NCTC 9757 / MK</strain>
    </source>
</reference>
<evidence type="ECO:0000255" key="1">
    <source>
        <dbReference type="HAMAP-Rule" id="MF_00415"/>
    </source>
</evidence>
<feature type="signal peptide" evidence="1">
    <location>
        <begin position="1"/>
        <end position="17"/>
    </location>
</feature>
<feature type="chain" id="PRO_0000009440" description="Flagellar L-ring protein 2">
    <location>
        <begin position="18"/>
        <end position="227"/>
    </location>
</feature>
<feature type="lipid moiety-binding region" description="N-palmitoyl cysteine" evidence="1">
    <location>
        <position position="18"/>
    </location>
</feature>
<feature type="lipid moiety-binding region" description="S-diacylglycerol cysteine" evidence="1">
    <location>
        <position position="18"/>
    </location>
</feature>
<dbReference type="EMBL" id="AE016825">
    <property type="protein sequence ID" value="AAQ60550.1"/>
    <property type="molecule type" value="Genomic_DNA"/>
</dbReference>
<dbReference type="RefSeq" id="WP_011136429.1">
    <property type="nucleotide sequence ID" value="NC_005085.1"/>
</dbReference>
<dbReference type="SMR" id="Q7NU21"/>
<dbReference type="STRING" id="243365.CV_2882"/>
<dbReference type="DNASU" id="2548166"/>
<dbReference type="GeneID" id="66368581"/>
<dbReference type="KEGG" id="cvi:CV_2882"/>
<dbReference type="eggNOG" id="COG2063">
    <property type="taxonomic scope" value="Bacteria"/>
</dbReference>
<dbReference type="HOGENOM" id="CLU_069313_0_0_4"/>
<dbReference type="OrthoDB" id="9789463at2"/>
<dbReference type="Proteomes" id="UP000001424">
    <property type="component" value="Chromosome"/>
</dbReference>
<dbReference type="GO" id="GO:0009427">
    <property type="term" value="C:bacterial-type flagellum basal body, distal rod, L ring"/>
    <property type="evidence" value="ECO:0007669"/>
    <property type="project" value="InterPro"/>
</dbReference>
<dbReference type="GO" id="GO:0009279">
    <property type="term" value="C:cell outer membrane"/>
    <property type="evidence" value="ECO:0007669"/>
    <property type="project" value="UniProtKB-SubCell"/>
</dbReference>
<dbReference type="GO" id="GO:0003774">
    <property type="term" value="F:cytoskeletal motor activity"/>
    <property type="evidence" value="ECO:0007669"/>
    <property type="project" value="InterPro"/>
</dbReference>
<dbReference type="GO" id="GO:0071973">
    <property type="term" value="P:bacterial-type flagellum-dependent cell motility"/>
    <property type="evidence" value="ECO:0007669"/>
    <property type="project" value="InterPro"/>
</dbReference>
<dbReference type="HAMAP" id="MF_00415">
    <property type="entry name" value="FlgH"/>
    <property type="match status" value="1"/>
</dbReference>
<dbReference type="InterPro" id="IPR000527">
    <property type="entry name" value="Flag_Lring"/>
</dbReference>
<dbReference type="PANTHER" id="PTHR34933">
    <property type="entry name" value="FLAGELLAR L-RING PROTEIN"/>
    <property type="match status" value="1"/>
</dbReference>
<dbReference type="PANTHER" id="PTHR34933:SF3">
    <property type="entry name" value="FLAGELLAR L-RING PROTEIN"/>
    <property type="match status" value="1"/>
</dbReference>
<dbReference type="Pfam" id="PF02107">
    <property type="entry name" value="FlgH"/>
    <property type="match status" value="1"/>
</dbReference>
<dbReference type="PRINTS" id="PR01008">
    <property type="entry name" value="FLGLRINGFLGH"/>
</dbReference>
<dbReference type="PROSITE" id="PS51257">
    <property type="entry name" value="PROKAR_LIPOPROTEIN"/>
    <property type="match status" value="1"/>
</dbReference>
<name>FLGH2_CHRVO</name>
<organism>
    <name type="scientific">Chromobacterium violaceum (strain ATCC 12472 / DSM 30191 / JCM 1249 / CCUG 213 / NBRC 12614 / NCIMB 9131 / NCTC 9757 / MK)</name>
    <dbReference type="NCBI Taxonomy" id="243365"/>
    <lineage>
        <taxon>Bacteria</taxon>
        <taxon>Pseudomonadati</taxon>
        <taxon>Pseudomonadota</taxon>
        <taxon>Betaproteobacteria</taxon>
        <taxon>Neisseriales</taxon>
        <taxon>Chromobacteriaceae</taxon>
        <taxon>Chromobacterium</taxon>
    </lineage>
</organism>